<name>POPB_RALN1</name>
<protein>
    <recommendedName>
        <fullName>Protein PopB</fullName>
    </recommendedName>
</protein>
<sequence>MSHSKIKAGGHGSSGIGNDFTPAKTPAPATPAPQSQQVNDLLGRGVGNALNKSNLGSDSQTWTPGSTMVSLKSRSSSSHKPDTGGDTKPDSTSGGKRKRDDETDPNAETEGGKKKKKRDDENDSSQAGGAGSSAGSSGSPEDALMNIALQRAIQRQTQTRQKMQEAMKIKDDDD</sequence>
<reference key="1">
    <citation type="journal article" date="2000" name="Mol. Microbiol.">
        <title>Two novel proteins, PopB, which has functional nuclear localization signals, and PopC, which has a large leucine-rich repeat domain, are secreted through the Hrp-secretion apparatus of Ralstonia solanacearum.</title>
        <authorList>
            <person name="Gueneron M."/>
            <person name="Timmers A.C.J."/>
            <person name="Boucher C."/>
            <person name="Arlat M."/>
        </authorList>
    </citation>
    <scope>NUCLEOTIDE SEQUENCE [GENOMIC DNA]</scope>
    <source>
        <strain>ATCC BAA-1114 / GMI1000</strain>
    </source>
</reference>
<reference key="2">
    <citation type="journal article" date="2002" name="Nature">
        <title>Genome sequence of the plant pathogen Ralstonia solanacearum.</title>
        <authorList>
            <person name="Salanoubat M."/>
            <person name="Genin S."/>
            <person name="Artiguenave F."/>
            <person name="Gouzy J."/>
            <person name="Mangenot S."/>
            <person name="Arlat M."/>
            <person name="Billault A."/>
            <person name="Brottier P."/>
            <person name="Camus J.-C."/>
            <person name="Cattolico L."/>
            <person name="Chandler M."/>
            <person name="Choisne N."/>
            <person name="Claudel-Renard C."/>
            <person name="Cunnac S."/>
            <person name="Demange N."/>
            <person name="Gaspin C."/>
            <person name="Lavie M."/>
            <person name="Moisan A."/>
            <person name="Robert C."/>
            <person name="Saurin W."/>
            <person name="Schiex T."/>
            <person name="Siguier P."/>
            <person name="Thebault P."/>
            <person name="Whalen M."/>
            <person name="Wincker P."/>
            <person name="Levy M."/>
            <person name="Weissenbach J."/>
            <person name="Boucher C.A."/>
        </authorList>
    </citation>
    <scope>NUCLEOTIDE SEQUENCE [LARGE SCALE GENOMIC DNA]</scope>
    <source>
        <strain>ATCC BAA-1114 / GMI1000</strain>
    </source>
</reference>
<comment type="function">
    <text>Probably involved in host-pathogen interactions.</text>
</comment>
<comment type="subcellular location">
    <subcellularLocation>
        <location>Secreted</location>
    </subcellularLocation>
</comment>
<keyword id="KW-0614">Plasmid</keyword>
<keyword id="KW-1185">Reference proteome</keyword>
<keyword id="KW-0964">Secreted</keyword>
<geneLocation type="plasmid">
    <name>megaplasmid Rsp</name>
</geneLocation>
<organism>
    <name type="scientific">Ralstonia nicotianae (strain ATCC BAA-1114 / GMI1000)</name>
    <name type="common">Ralstonia solanacearum</name>
    <dbReference type="NCBI Taxonomy" id="267608"/>
    <lineage>
        <taxon>Bacteria</taxon>
        <taxon>Pseudomonadati</taxon>
        <taxon>Pseudomonadota</taxon>
        <taxon>Betaproteobacteria</taxon>
        <taxon>Burkholderiales</taxon>
        <taxon>Burkholderiaceae</taxon>
        <taxon>Ralstonia</taxon>
        <taxon>Ralstonia solanacearum species complex</taxon>
    </lineage>
</organism>
<gene>
    <name type="primary">popB</name>
    <name type="ordered locus">RSp0876</name>
    <name type="ORF">RS01647</name>
</gene>
<dbReference type="EMBL" id="AJ245811">
    <property type="protein sequence ID" value="CAB57880.1"/>
    <property type="molecule type" value="Genomic_DNA"/>
</dbReference>
<dbReference type="EMBL" id="AL646053">
    <property type="protein sequence ID" value="CAD18027.1"/>
    <property type="molecule type" value="Genomic_DNA"/>
</dbReference>
<dbReference type="RefSeq" id="WP_011004173.1">
    <property type="nucleotide sequence ID" value="NC_003296.1"/>
</dbReference>
<dbReference type="SMR" id="Q9RBS1"/>
<dbReference type="STRING" id="267608.RSp0876"/>
<dbReference type="EnsemblBacteria" id="CAD18027">
    <property type="protein sequence ID" value="CAD18027"/>
    <property type="gene ID" value="RSp0876"/>
</dbReference>
<dbReference type="KEGG" id="rso:RSp0876"/>
<dbReference type="PATRIC" id="fig|267608.8.peg.4346"/>
<dbReference type="HOGENOM" id="CLU_1538812_0_0_4"/>
<dbReference type="Proteomes" id="UP000001436">
    <property type="component" value="Plasmid megaplasmid Rsp"/>
</dbReference>
<dbReference type="GO" id="GO:0005576">
    <property type="term" value="C:extracellular region"/>
    <property type="evidence" value="ECO:0007669"/>
    <property type="project" value="UniProtKB-SubCell"/>
</dbReference>
<accession>Q9RBS1</accession>
<feature type="chain" id="PRO_0000058522" description="Protein PopB">
    <location>
        <begin position="1"/>
        <end position="174"/>
    </location>
</feature>
<feature type="region of interest" description="Disordered" evidence="1">
    <location>
        <begin position="1"/>
        <end position="174"/>
    </location>
</feature>
<feature type="compositionally biased region" description="Polar residues" evidence="1">
    <location>
        <begin position="50"/>
        <end position="65"/>
    </location>
</feature>
<feature type="compositionally biased region" description="Low complexity" evidence="1">
    <location>
        <begin position="66"/>
        <end position="78"/>
    </location>
</feature>
<feature type="compositionally biased region" description="Basic and acidic residues" evidence="1">
    <location>
        <begin position="79"/>
        <end position="89"/>
    </location>
</feature>
<feature type="compositionally biased region" description="Low complexity" evidence="1">
    <location>
        <begin position="147"/>
        <end position="161"/>
    </location>
</feature>
<feature type="compositionally biased region" description="Basic and acidic residues" evidence="1">
    <location>
        <begin position="162"/>
        <end position="174"/>
    </location>
</feature>
<evidence type="ECO:0000256" key="1">
    <source>
        <dbReference type="SAM" id="MobiDB-lite"/>
    </source>
</evidence>
<proteinExistence type="predicted"/>